<comment type="function">
    <text evidence="1">Activates KDO (a required 8-carbon sugar) for incorporation into bacterial lipopolysaccharide in Gram-negative bacteria.</text>
</comment>
<comment type="catalytic activity">
    <reaction evidence="1">
        <text>3-deoxy-alpha-D-manno-oct-2-ulosonate + CTP = CMP-3-deoxy-beta-D-manno-octulosonate + diphosphate</text>
        <dbReference type="Rhea" id="RHEA:23448"/>
        <dbReference type="ChEBI" id="CHEBI:33019"/>
        <dbReference type="ChEBI" id="CHEBI:37563"/>
        <dbReference type="ChEBI" id="CHEBI:85986"/>
        <dbReference type="ChEBI" id="CHEBI:85987"/>
        <dbReference type="EC" id="2.7.7.38"/>
    </reaction>
</comment>
<comment type="pathway">
    <text evidence="1">Nucleotide-sugar biosynthesis; CMP-3-deoxy-D-manno-octulosonate biosynthesis; CMP-3-deoxy-D-manno-octulosonate from 3-deoxy-D-manno-octulosonate and CTP: step 1/1.</text>
</comment>
<comment type="pathway">
    <text evidence="1">Bacterial outer membrane biogenesis; lipopolysaccharide biosynthesis.</text>
</comment>
<comment type="subcellular location">
    <subcellularLocation>
        <location evidence="1">Cytoplasm</location>
    </subcellularLocation>
</comment>
<comment type="similarity">
    <text evidence="1">Belongs to the KdsB family.</text>
</comment>
<dbReference type="EC" id="2.7.7.38" evidence="1"/>
<dbReference type="EMBL" id="CP001099">
    <property type="protein sequence ID" value="ACF10796.1"/>
    <property type="molecule type" value="Genomic_DNA"/>
</dbReference>
<dbReference type="RefSeq" id="WP_012501629.1">
    <property type="nucleotide sequence ID" value="NC_011027.1"/>
</dbReference>
<dbReference type="SMR" id="B3QL08"/>
<dbReference type="STRING" id="517417.Cpar_0372"/>
<dbReference type="KEGG" id="cpc:Cpar_0372"/>
<dbReference type="eggNOG" id="COG1212">
    <property type="taxonomic scope" value="Bacteria"/>
</dbReference>
<dbReference type="HOGENOM" id="CLU_065038_0_1_10"/>
<dbReference type="OrthoDB" id="9815559at2"/>
<dbReference type="UniPathway" id="UPA00030"/>
<dbReference type="UniPathway" id="UPA00358">
    <property type="reaction ID" value="UER00476"/>
</dbReference>
<dbReference type="Proteomes" id="UP000008811">
    <property type="component" value="Chromosome"/>
</dbReference>
<dbReference type="GO" id="GO:0005829">
    <property type="term" value="C:cytosol"/>
    <property type="evidence" value="ECO:0007669"/>
    <property type="project" value="TreeGrafter"/>
</dbReference>
<dbReference type="GO" id="GO:0008690">
    <property type="term" value="F:3-deoxy-manno-octulosonate cytidylyltransferase activity"/>
    <property type="evidence" value="ECO:0007669"/>
    <property type="project" value="UniProtKB-UniRule"/>
</dbReference>
<dbReference type="GO" id="GO:0033468">
    <property type="term" value="P:CMP-keto-3-deoxy-D-manno-octulosonic acid biosynthetic process"/>
    <property type="evidence" value="ECO:0007669"/>
    <property type="project" value="UniProtKB-UniRule"/>
</dbReference>
<dbReference type="GO" id="GO:0009103">
    <property type="term" value="P:lipopolysaccharide biosynthetic process"/>
    <property type="evidence" value="ECO:0007669"/>
    <property type="project" value="UniProtKB-UniRule"/>
</dbReference>
<dbReference type="CDD" id="cd02517">
    <property type="entry name" value="CMP-KDO-Synthetase"/>
    <property type="match status" value="1"/>
</dbReference>
<dbReference type="Gene3D" id="3.90.550.10">
    <property type="entry name" value="Spore Coat Polysaccharide Biosynthesis Protein SpsA, Chain A"/>
    <property type="match status" value="1"/>
</dbReference>
<dbReference type="HAMAP" id="MF_00057">
    <property type="entry name" value="KdsB"/>
    <property type="match status" value="1"/>
</dbReference>
<dbReference type="InterPro" id="IPR003329">
    <property type="entry name" value="Cytidylyl_trans"/>
</dbReference>
<dbReference type="InterPro" id="IPR004528">
    <property type="entry name" value="KdsB"/>
</dbReference>
<dbReference type="InterPro" id="IPR029044">
    <property type="entry name" value="Nucleotide-diphossugar_trans"/>
</dbReference>
<dbReference type="NCBIfam" id="TIGR00466">
    <property type="entry name" value="kdsB"/>
    <property type="match status" value="1"/>
</dbReference>
<dbReference type="NCBIfam" id="NF003950">
    <property type="entry name" value="PRK05450.1-3"/>
    <property type="match status" value="1"/>
</dbReference>
<dbReference type="NCBIfam" id="NF003952">
    <property type="entry name" value="PRK05450.1-5"/>
    <property type="match status" value="1"/>
</dbReference>
<dbReference type="NCBIfam" id="NF009905">
    <property type="entry name" value="PRK13368.1"/>
    <property type="match status" value="1"/>
</dbReference>
<dbReference type="PANTHER" id="PTHR42866">
    <property type="entry name" value="3-DEOXY-MANNO-OCTULOSONATE CYTIDYLYLTRANSFERASE"/>
    <property type="match status" value="1"/>
</dbReference>
<dbReference type="PANTHER" id="PTHR42866:SF2">
    <property type="entry name" value="3-DEOXY-MANNO-OCTULOSONATE CYTIDYLYLTRANSFERASE, MITOCHONDRIAL"/>
    <property type="match status" value="1"/>
</dbReference>
<dbReference type="Pfam" id="PF02348">
    <property type="entry name" value="CTP_transf_3"/>
    <property type="match status" value="1"/>
</dbReference>
<dbReference type="SUPFAM" id="SSF53448">
    <property type="entry name" value="Nucleotide-diphospho-sugar transferases"/>
    <property type="match status" value="1"/>
</dbReference>
<reference key="1">
    <citation type="submission" date="2008-06" db="EMBL/GenBank/DDBJ databases">
        <title>Complete sequence of Chlorobaculum parvum NCIB 8327.</title>
        <authorList>
            <consortium name="US DOE Joint Genome Institute"/>
            <person name="Lucas S."/>
            <person name="Copeland A."/>
            <person name="Lapidus A."/>
            <person name="Glavina del Rio T."/>
            <person name="Dalin E."/>
            <person name="Tice H."/>
            <person name="Bruce D."/>
            <person name="Goodwin L."/>
            <person name="Pitluck S."/>
            <person name="Schmutz J."/>
            <person name="Larimer F."/>
            <person name="Land M."/>
            <person name="Hauser L."/>
            <person name="Kyrpides N."/>
            <person name="Mikhailova N."/>
            <person name="Zhao F."/>
            <person name="Li T."/>
            <person name="Liu Z."/>
            <person name="Overmann J."/>
            <person name="Bryant D.A."/>
            <person name="Richardson P."/>
        </authorList>
    </citation>
    <scope>NUCLEOTIDE SEQUENCE [LARGE SCALE GENOMIC DNA]</scope>
    <source>
        <strain>DSM 263 / NCIMB 8327</strain>
    </source>
</reference>
<gene>
    <name evidence="1" type="primary">kdsB</name>
    <name type="ordered locus">Cpar_0372</name>
</gene>
<feature type="chain" id="PRO_0000370044" description="3-deoxy-manno-octulosonate cytidylyltransferase">
    <location>
        <begin position="1"/>
        <end position="248"/>
    </location>
</feature>
<keyword id="KW-0963">Cytoplasm</keyword>
<keyword id="KW-0448">Lipopolysaccharide biosynthesis</keyword>
<keyword id="KW-0548">Nucleotidyltransferase</keyword>
<keyword id="KW-0808">Transferase</keyword>
<proteinExistence type="inferred from homology"/>
<organism>
    <name type="scientific">Chlorobaculum parvum (strain DSM 263 / NCIMB 8327)</name>
    <name type="common">Chlorobium vibrioforme subsp. thiosulfatophilum</name>
    <dbReference type="NCBI Taxonomy" id="517417"/>
    <lineage>
        <taxon>Bacteria</taxon>
        <taxon>Pseudomonadati</taxon>
        <taxon>Chlorobiota</taxon>
        <taxon>Chlorobiia</taxon>
        <taxon>Chlorobiales</taxon>
        <taxon>Chlorobiaceae</taxon>
        <taxon>Chlorobaculum</taxon>
    </lineage>
</organism>
<evidence type="ECO:0000255" key="1">
    <source>
        <dbReference type="HAMAP-Rule" id="MF_00057"/>
    </source>
</evidence>
<sequence>MNVVIVIPARLSSNRLKEKMLADLEGAPLIVRTWQQAMKSRLANRVVVATDSERIFAVLRDAGAEVVMTSPDLTCGTDRIAEAAEQVGGDVFVNLQGDEPLIDPATIDLAIAPFFEDGPMPDCTTLVFPLKPDERHIIDDPHVVKAVLDAKGNALYFSRCPIPYRRETLPDTRYYRHIGLYAFRADVLKAFVALPPSMLERTESLEQLRLLENGYRIRCIETTTDTPGVNTEEELEEVRRLFRERFGS</sequence>
<accession>B3QL08</accession>
<protein>
    <recommendedName>
        <fullName evidence="1">3-deoxy-manno-octulosonate cytidylyltransferase</fullName>
        <ecNumber evidence="1">2.7.7.38</ecNumber>
    </recommendedName>
    <alternativeName>
        <fullName evidence="1">CMP-2-keto-3-deoxyoctulosonic acid synthase</fullName>
        <shortName evidence="1">CKS</shortName>
        <shortName evidence="1">CMP-KDO synthase</shortName>
    </alternativeName>
</protein>
<name>KDSB_CHLP8</name>